<proteinExistence type="evidence at protein level"/>
<accession>P60403</accession>
<gene>
    <name evidence="1" type="primary">rplB</name>
    <name type="ordered locus">RPA3247</name>
</gene>
<organism>
    <name type="scientific">Rhodopseudomonas palustris (strain ATCC BAA-98 / CGA009)</name>
    <dbReference type="NCBI Taxonomy" id="258594"/>
    <lineage>
        <taxon>Bacteria</taxon>
        <taxon>Pseudomonadati</taxon>
        <taxon>Pseudomonadota</taxon>
        <taxon>Alphaproteobacteria</taxon>
        <taxon>Hyphomicrobiales</taxon>
        <taxon>Nitrobacteraceae</taxon>
        <taxon>Rhodopseudomonas</taxon>
    </lineage>
</organism>
<comment type="function">
    <text evidence="1">One of the primary rRNA binding proteins. Required for association of the 30S and 50S subunits to form the 70S ribosome, for tRNA binding and peptide bond formation. It has been suggested to have peptidyltransferase activity; this is somewhat controversial. Makes several contacts with the 16S rRNA in the 70S ribosome.</text>
</comment>
<comment type="subunit">
    <text evidence="1">Part of the 50S ribosomal subunit. Forms a bridge to the 30S subunit in the 70S ribosome.</text>
</comment>
<comment type="miscellaneous">
    <text>The initiator methionine may be removed.</text>
</comment>
<comment type="similarity">
    <text evidence="1">Belongs to the universal ribosomal protein uL2 family.</text>
</comment>
<feature type="chain" id="PRO_0000129606" description="Large ribosomal subunit protein uL2">
    <location>
        <begin position="1"/>
        <end position="278"/>
    </location>
</feature>
<feature type="region of interest" description="Disordered" evidence="2">
    <location>
        <begin position="222"/>
        <end position="278"/>
    </location>
</feature>
<keyword id="KW-0687">Ribonucleoprotein</keyword>
<keyword id="KW-0689">Ribosomal protein</keyword>
<keyword id="KW-0694">RNA-binding</keyword>
<keyword id="KW-0699">rRNA-binding</keyword>
<dbReference type="EMBL" id="BX572603">
    <property type="protein sequence ID" value="CAE28688.1"/>
    <property type="molecule type" value="Genomic_DNA"/>
</dbReference>
<dbReference type="RefSeq" id="WP_011158792.1">
    <property type="nucleotide sequence ID" value="NZ_CP116810.1"/>
</dbReference>
<dbReference type="SMR" id="P60403"/>
<dbReference type="IntAct" id="P60403">
    <property type="interactions" value="1"/>
</dbReference>
<dbReference type="STRING" id="258594.RPA3247"/>
<dbReference type="GeneID" id="66894333"/>
<dbReference type="eggNOG" id="COG0090">
    <property type="taxonomic scope" value="Bacteria"/>
</dbReference>
<dbReference type="HOGENOM" id="CLU_036235_2_1_5"/>
<dbReference type="PhylomeDB" id="P60403"/>
<dbReference type="GO" id="GO:0015934">
    <property type="term" value="C:large ribosomal subunit"/>
    <property type="evidence" value="ECO:0007669"/>
    <property type="project" value="InterPro"/>
</dbReference>
<dbReference type="GO" id="GO:0019843">
    <property type="term" value="F:rRNA binding"/>
    <property type="evidence" value="ECO:0007669"/>
    <property type="project" value="UniProtKB-UniRule"/>
</dbReference>
<dbReference type="GO" id="GO:0003735">
    <property type="term" value="F:structural constituent of ribosome"/>
    <property type="evidence" value="ECO:0007669"/>
    <property type="project" value="InterPro"/>
</dbReference>
<dbReference type="GO" id="GO:0016740">
    <property type="term" value="F:transferase activity"/>
    <property type="evidence" value="ECO:0007669"/>
    <property type="project" value="InterPro"/>
</dbReference>
<dbReference type="GO" id="GO:0002181">
    <property type="term" value="P:cytoplasmic translation"/>
    <property type="evidence" value="ECO:0007669"/>
    <property type="project" value="TreeGrafter"/>
</dbReference>
<dbReference type="FunFam" id="2.30.30.30:FF:000055">
    <property type="entry name" value="50S ribosomal protein L2"/>
    <property type="match status" value="1"/>
</dbReference>
<dbReference type="FunFam" id="2.40.50.140:FF:000003">
    <property type="entry name" value="50S ribosomal protein L2"/>
    <property type="match status" value="1"/>
</dbReference>
<dbReference type="FunFam" id="4.10.950.10:FF:000001">
    <property type="entry name" value="50S ribosomal protein L2"/>
    <property type="match status" value="1"/>
</dbReference>
<dbReference type="Gene3D" id="2.30.30.30">
    <property type="match status" value="1"/>
</dbReference>
<dbReference type="Gene3D" id="2.40.50.140">
    <property type="entry name" value="Nucleic acid-binding proteins"/>
    <property type="match status" value="1"/>
</dbReference>
<dbReference type="Gene3D" id="4.10.950.10">
    <property type="entry name" value="Ribosomal protein L2, domain 3"/>
    <property type="match status" value="1"/>
</dbReference>
<dbReference type="HAMAP" id="MF_01320_B">
    <property type="entry name" value="Ribosomal_uL2_B"/>
    <property type="match status" value="1"/>
</dbReference>
<dbReference type="InterPro" id="IPR012340">
    <property type="entry name" value="NA-bd_OB-fold"/>
</dbReference>
<dbReference type="InterPro" id="IPR014722">
    <property type="entry name" value="Rib_uL2_dom2"/>
</dbReference>
<dbReference type="InterPro" id="IPR002171">
    <property type="entry name" value="Ribosomal_uL2"/>
</dbReference>
<dbReference type="InterPro" id="IPR005880">
    <property type="entry name" value="Ribosomal_uL2_bac/org-type"/>
</dbReference>
<dbReference type="InterPro" id="IPR022669">
    <property type="entry name" value="Ribosomal_uL2_C"/>
</dbReference>
<dbReference type="InterPro" id="IPR022671">
    <property type="entry name" value="Ribosomal_uL2_CS"/>
</dbReference>
<dbReference type="InterPro" id="IPR014726">
    <property type="entry name" value="Ribosomal_uL2_dom3"/>
</dbReference>
<dbReference type="InterPro" id="IPR022666">
    <property type="entry name" value="Ribosomal_uL2_RNA-bd_dom"/>
</dbReference>
<dbReference type="InterPro" id="IPR008991">
    <property type="entry name" value="Translation_prot_SH3-like_sf"/>
</dbReference>
<dbReference type="NCBIfam" id="TIGR01171">
    <property type="entry name" value="rplB_bact"/>
    <property type="match status" value="1"/>
</dbReference>
<dbReference type="PANTHER" id="PTHR13691:SF5">
    <property type="entry name" value="LARGE RIBOSOMAL SUBUNIT PROTEIN UL2M"/>
    <property type="match status" value="1"/>
</dbReference>
<dbReference type="PANTHER" id="PTHR13691">
    <property type="entry name" value="RIBOSOMAL PROTEIN L2"/>
    <property type="match status" value="1"/>
</dbReference>
<dbReference type="Pfam" id="PF00181">
    <property type="entry name" value="Ribosomal_L2"/>
    <property type="match status" value="1"/>
</dbReference>
<dbReference type="Pfam" id="PF03947">
    <property type="entry name" value="Ribosomal_L2_C"/>
    <property type="match status" value="1"/>
</dbReference>
<dbReference type="PIRSF" id="PIRSF002158">
    <property type="entry name" value="Ribosomal_L2"/>
    <property type="match status" value="1"/>
</dbReference>
<dbReference type="SMART" id="SM01383">
    <property type="entry name" value="Ribosomal_L2"/>
    <property type="match status" value="1"/>
</dbReference>
<dbReference type="SMART" id="SM01382">
    <property type="entry name" value="Ribosomal_L2_C"/>
    <property type="match status" value="1"/>
</dbReference>
<dbReference type="SUPFAM" id="SSF50249">
    <property type="entry name" value="Nucleic acid-binding proteins"/>
    <property type="match status" value="1"/>
</dbReference>
<dbReference type="SUPFAM" id="SSF50104">
    <property type="entry name" value="Translation proteins SH3-like domain"/>
    <property type="match status" value="1"/>
</dbReference>
<dbReference type="PROSITE" id="PS00467">
    <property type="entry name" value="RIBOSOMAL_L2"/>
    <property type="match status" value="1"/>
</dbReference>
<evidence type="ECO:0000255" key="1">
    <source>
        <dbReference type="HAMAP-Rule" id="MF_01320"/>
    </source>
</evidence>
<evidence type="ECO:0000256" key="2">
    <source>
        <dbReference type="SAM" id="MobiDB-lite"/>
    </source>
</evidence>
<evidence type="ECO:0000305" key="3"/>
<reference key="1">
    <citation type="journal article" date="2004" name="Nat. Biotechnol.">
        <title>Complete genome sequence of the metabolically versatile photosynthetic bacterium Rhodopseudomonas palustris.</title>
        <authorList>
            <person name="Larimer F.W."/>
            <person name="Chain P."/>
            <person name="Hauser L."/>
            <person name="Lamerdin J.E."/>
            <person name="Malfatti S."/>
            <person name="Do L."/>
            <person name="Land M.L."/>
            <person name="Pelletier D.A."/>
            <person name="Beatty J.T."/>
            <person name="Lang A.S."/>
            <person name="Tabita F.R."/>
            <person name="Gibson J.L."/>
            <person name="Hanson T.E."/>
            <person name="Bobst C."/>
            <person name="Torres y Torres J.L."/>
            <person name="Peres C."/>
            <person name="Harrison F.H."/>
            <person name="Gibson J."/>
            <person name="Harwood C.S."/>
        </authorList>
    </citation>
    <scope>NUCLEOTIDE SEQUENCE [LARGE SCALE GENOMIC DNA]</scope>
    <source>
        <strain>ATCC BAA-98 / CGA009</strain>
    </source>
</reference>
<reference key="2">
    <citation type="journal article" date="2004" name="J. Proteome Res.">
        <title>Characterization of the 70S ribosome from Rhodopseudomonas palustris using an integrated 'top-down' and 'bottom-up' mass spectrometric approach.</title>
        <authorList>
            <person name="Strader M.B."/>
            <person name="VerBerkmoes N.C."/>
            <person name="Tabb D.L."/>
            <person name="Connelly H.M."/>
            <person name="Barton J.W."/>
            <person name="Bruce B.D."/>
            <person name="Pelletier D.A."/>
            <person name="Davison B.H."/>
            <person name="Hettich R.L."/>
            <person name="Larimer F.W."/>
            <person name="Hurst G.B."/>
        </authorList>
    </citation>
    <scope>IDENTIFICATION BY MASS SPECTROMETRY</scope>
    <source>
        <strain>ATCC BAA-98 / CGA009</strain>
    </source>
</reference>
<sequence length="278" mass="30644">MALKTFNPTTPGQRQLVMVDRSALYKGKPVKRLTEGKNSNGGRNNTGRITVRFRGGGHKQAYRLVDFKRTKVDVPAKVERLEYDPNRTAFIALIKYEDGEQAYILAPQRLAVGDTVIAGAYVDVKPGNVMPLGNMPIGTIVHNVELKIGKGGQLARSAGTYAQIVGRDHDYVILRMNSGEQRLIHGRCIAAIGAVSNPDHMNISIGKAGRKRWLGRRPHNRGVVMNPIDHPHGGGEGRTSGGRHPVTPWGKPTKGKKTRSNKSTDKFILISRHKRKKK</sequence>
<protein>
    <recommendedName>
        <fullName evidence="1">Large ribosomal subunit protein uL2</fullName>
    </recommendedName>
    <alternativeName>
        <fullName evidence="3">50S ribosomal protein L2</fullName>
    </alternativeName>
    <alternativeName>
        <fullName>RRP-L2</fullName>
    </alternativeName>
</protein>
<name>RL2_RHOPA</name>